<proteinExistence type="inferred from homology"/>
<gene>
    <name evidence="1" type="primary">rpmA</name>
    <name type="ordered locus">BAPKO_0829</name>
    <name type="ordered locus">BafPKo_0806</name>
</gene>
<name>RL27_BORAP</name>
<dbReference type="EMBL" id="CP000395">
    <property type="protein sequence ID" value="ABH02054.1"/>
    <property type="molecule type" value="Genomic_DNA"/>
</dbReference>
<dbReference type="EMBL" id="CP002933">
    <property type="protein sequence ID" value="AEL69996.1"/>
    <property type="molecule type" value="Genomic_DNA"/>
</dbReference>
<dbReference type="RefSeq" id="WP_002656482.1">
    <property type="nucleotide sequence ID" value="NZ_CP160066.1"/>
</dbReference>
<dbReference type="SMR" id="Q0SM74"/>
<dbReference type="STRING" id="29518.BLA32_00325"/>
<dbReference type="GeneID" id="77265635"/>
<dbReference type="KEGG" id="baf:BAPKO_0829"/>
<dbReference type="KEGG" id="bafz:BafPKo_0806"/>
<dbReference type="PATRIC" id="fig|390236.22.peg.769"/>
<dbReference type="eggNOG" id="COG0211">
    <property type="taxonomic scope" value="Bacteria"/>
</dbReference>
<dbReference type="HOGENOM" id="CLU_095424_4_1_12"/>
<dbReference type="OrthoDB" id="9803474at2"/>
<dbReference type="Proteomes" id="UP000005216">
    <property type="component" value="Chromosome"/>
</dbReference>
<dbReference type="GO" id="GO:0022625">
    <property type="term" value="C:cytosolic large ribosomal subunit"/>
    <property type="evidence" value="ECO:0007669"/>
    <property type="project" value="TreeGrafter"/>
</dbReference>
<dbReference type="GO" id="GO:0003735">
    <property type="term" value="F:structural constituent of ribosome"/>
    <property type="evidence" value="ECO:0007669"/>
    <property type="project" value="InterPro"/>
</dbReference>
<dbReference type="GO" id="GO:0006412">
    <property type="term" value="P:translation"/>
    <property type="evidence" value="ECO:0007669"/>
    <property type="project" value="UniProtKB-UniRule"/>
</dbReference>
<dbReference type="FunFam" id="2.40.50.100:FF:000020">
    <property type="entry name" value="50S ribosomal protein L27"/>
    <property type="match status" value="1"/>
</dbReference>
<dbReference type="Gene3D" id="2.40.50.100">
    <property type="match status" value="1"/>
</dbReference>
<dbReference type="HAMAP" id="MF_00539">
    <property type="entry name" value="Ribosomal_bL27"/>
    <property type="match status" value="1"/>
</dbReference>
<dbReference type="InterPro" id="IPR001684">
    <property type="entry name" value="Ribosomal_bL27"/>
</dbReference>
<dbReference type="InterPro" id="IPR018261">
    <property type="entry name" value="Ribosomal_bL27_CS"/>
</dbReference>
<dbReference type="NCBIfam" id="TIGR00062">
    <property type="entry name" value="L27"/>
    <property type="match status" value="1"/>
</dbReference>
<dbReference type="PANTHER" id="PTHR15893:SF0">
    <property type="entry name" value="LARGE RIBOSOMAL SUBUNIT PROTEIN BL27M"/>
    <property type="match status" value="1"/>
</dbReference>
<dbReference type="PANTHER" id="PTHR15893">
    <property type="entry name" value="RIBOSOMAL PROTEIN L27"/>
    <property type="match status" value="1"/>
</dbReference>
<dbReference type="Pfam" id="PF01016">
    <property type="entry name" value="Ribosomal_L27"/>
    <property type="match status" value="1"/>
</dbReference>
<dbReference type="PRINTS" id="PR00063">
    <property type="entry name" value="RIBOSOMALL27"/>
</dbReference>
<dbReference type="SUPFAM" id="SSF110324">
    <property type="entry name" value="Ribosomal L27 protein-like"/>
    <property type="match status" value="1"/>
</dbReference>
<dbReference type="PROSITE" id="PS00831">
    <property type="entry name" value="RIBOSOMAL_L27"/>
    <property type="match status" value="1"/>
</dbReference>
<keyword id="KW-0687">Ribonucleoprotein</keyword>
<keyword id="KW-0689">Ribosomal protein</keyword>
<accession>Q0SM74</accession>
<accession>G0IRW1</accession>
<sequence length="81" mass="8748">MATSKSGGSSKNGRDSISKRLGVKRSGGQFVKAGEIIVRQRGTKFHKGKNVGLGRDYTIFALSSGKVEFKTLKGRKYVSIV</sequence>
<organism>
    <name type="scientific">Borreliella afzelii (strain PKo)</name>
    <name type="common">Borrelia afzelii</name>
    <dbReference type="NCBI Taxonomy" id="390236"/>
    <lineage>
        <taxon>Bacteria</taxon>
        <taxon>Pseudomonadati</taxon>
        <taxon>Spirochaetota</taxon>
        <taxon>Spirochaetia</taxon>
        <taxon>Spirochaetales</taxon>
        <taxon>Borreliaceae</taxon>
        <taxon>Borreliella</taxon>
    </lineage>
</organism>
<feature type="chain" id="PRO_1000017420" description="Large ribosomal subunit protein bL27">
    <location>
        <begin position="1"/>
        <end position="81"/>
    </location>
</feature>
<feature type="region of interest" description="Disordered" evidence="2">
    <location>
        <begin position="1"/>
        <end position="20"/>
    </location>
</feature>
<feature type="compositionally biased region" description="Polar residues" evidence="2">
    <location>
        <begin position="1"/>
        <end position="11"/>
    </location>
</feature>
<evidence type="ECO:0000255" key="1">
    <source>
        <dbReference type="HAMAP-Rule" id="MF_00539"/>
    </source>
</evidence>
<evidence type="ECO:0000256" key="2">
    <source>
        <dbReference type="SAM" id="MobiDB-lite"/>
    </source>
</evidence>
<evidence type="ECO:0000305" key="3"/>
<protein>
    <recommendedName>
        <fullName evidence="1">Large ribosomal subunit protein bL27</fullName>
    </recommendedName>
    <alternativeName>
        <fullName evidence="3">50S ribosomal protein L27</fullName>
    </alternativeName>
</protein>
<comment type="similarity">
    <text evidence="1">Belongs to the bacterial ribosomal protein bL27 family.</text>
</comment>
<reference key="1">
    <citation type="journal article" date="2006" name="BMC Genomics">
        <title>Comparative genome analysis: selection pressure on the Borrelia vls cassettes is essential for infectivity.</title>
        <authorList>
            <person name="Gloeckner G."/>
            <person name="Schulte-Spechtel U."/>
            <person name="Schilhabel M."/>
            <person name="Felder M."/>
            <person name="Suehnel J."/>
            <person name="Wilske B."/>
            <person name="Platzer M."/>
        </authorList>
    </citation>
    <scope>NUCLEOTIDE SEQUENCE [LARGE SCALE GENOMIC DNA]</scope>
    <source>
        <strain>PKo</strain>
    </source>
</reference>
<reference key="2">
    <citation type="journal article" date="2011" name="J. Bacteriol.">
        <title>Whole-genome sequences of two Borrelia afzelii and two Borrelia garinii Lyme disease agent isolates.</title>
        <authorList>
            <person name="Casjens S.R."/>
            <person name="Mongodin E.F."/>
            <person name="Qiu W.G."/>
            <person name="Dunn J.J."/>
            <person name="Luft B.J."/>
            <person name="Fraser-Liggett C.M."/>
            <person name="Schutzer S.E."/>
        </authorList>
    </citation>
    <scope>NUCLEOTIDE SEQUENCE [LARGE SCALE GENOMIC DNA]</scope>
    <source>
        <strain>PKo</strain>
    </source>
</reference>